<sequence>MTTHEQIINYTIKPHGGTLINRVVEGEERDHLLEAAQSYKVITLNPWSISDLELIGIGGFSPLTGFMGVADYTKVVEDTHLENGLVWSIPITLPVTEEEADKLEIGDDIALYGEDGELYGTLKLEEKYTYDKKKEAQNVYGTTDEAHPGVKKVYDKGNVYLAGPIQLINRPKHDEFSDFHLDPAETRQLFHDLGWKTVVGFQTRNPVHRAHEYIQKSALEIVDGLLLNPLVGETKSDDIPANVRMESYQAILKNYFPKDRARLVIYPAAMRYAGPREAILHATVRKNYGCTHFIVGRDHAGVGDYYGTYEAQELISQFEDELDIQILKFEHAFYCEKCGNMATAKTCPHDASEHVHLSGTKVREKLRNGESLPTKFSRPEVAEVLIKGLKQN</sequence>
<accession>Q4L9E7</accession>
<keyword id="KW-0067">ATP-binding</keyword>
<keyword id="KW-0547">Nucleotide-binding</keyword>
<keyword id="KW-0548">Nucleotidyltransferase</keyword>
<keyword id="KW-0808">Transferase</keyword>
<organism>
    <name type="scientific">Staphylococcus haemolyticus (strain JCSC1435)</name>
    <dbReference type="NCBI Taxonomy" id="279808"/>
    <lineage>
        <taxon>Bacteria</taxon>
        <taxon>Bacillati</taxon>
        <taxon>Bacillota</taxon>
        <taxon>Bacilli</taxon>
        <taxon>Bacillales</taxon>
        <taxon>Staphylococcaceae</taxon>
        <taxon>Staphylococcus</taxon>
    </lineage>
</organism>
<evidence type="ECO:0000255" key="1">
    <source>
        <dbReference type="HAMAP-Rule" id="MF_00066"/>
    </source>
</evidence>
<protein>
    <recommendedName>
        <fullName evidence="1">Sulfate adenylyltransferase</fullName>
        <ecNumber evidence="1">2.7.7.4</ecNumber>
    </recommendedName>
    <alternativeName>
        <fullName evidence="1">ATP-sulfurylase</fullName>
    </alternativeName>
    <alternativeName>
        <fullName evidence="1">Sulfate adenylate transferase</fullName>
        <shortName evidence="1">SAT</shortName>
    </alternativeName>
</protein>
<feature type="chain" id="PRO_1000009043" description="Sulfate adenylyltransferase">
    <location>
        <begin position="1"/>
        <end position="392"/>
    </location>
</feature>
<dbReference type="EC" id="2.7.7.4" evidence="1"/>
<dbReference type="EMBL" id="AP006716">
    <property type="protein sequence ID" value="BAE03728.1"/>
    <property type="molecule type" value="Genomic_DNA"/>
</dbReference>
<dbReference type="RefSeq" id="WP_011274745.1">
    <property type="nucleotide sequence ID" value="NC_007168.1"/>
</dbReference>
<dbReference type="SMR" id="Q4L9E7"/>
<dbReference type="KEGG" id="sha:SH0419"/>
<dbReference type="eggNOG" id="COG2046">
    <property type="taxonomic scope" value="Bacteria"/>
</dbReference>
<dbReference type="HOGENOM" id="CLU_022950_1_1_9"/>
<dbReference type="OrthoDB" id="9804504at2"/>
<dbReference type="UniPathway" id="UPA00140">
    <property type="reaction ID" value="UER00204"/>
</dbReference>
<dbReference type="Proteomes" id="UP000000543">
    <property type="component" value="Chromosome"/>
</dbReference>
<dbReference type="GO" id="GO:0005524">
    <property type="term" value="F:ATP binding"/>
    <property type="evidence" value="ECO:0007669"/>
    <property type="project" value="UniProtKB-KW"/>
</dbReference>
<dbReference type="GO" id="GO:0004781">
    <property type="term" value="F:sulfate adenylyltransferase (ATP) activity"/>
    <property type="evidence" value="ECO:0007669"/>
    <property type="project" value="UniProtKB-UniRule"/>
</dbReference>
<dbReference type="GO" id="GO:0070814">
    <property type="term" value="P:hydrogen sulfide biosynthetic process"/>
    <property type="evidence" value="ECO:0007669"/>
    <property type="project" value="UniProtKB-UniRule"/>
</dbReference>
<dbReference type="GO" id="GO:0000103">
    <property type="term" value="P:sulfate assimilation"/>
    <property type="evidence" value="ECO:0007669"/>
    <property type="project" value="UniProtKB-UniRule"/>
</dbReference>
<dbReference type="CDD" id="cd00517">
    <property type="entry name" value="ATPS"/>
    <property type="match status" value="1"/>
</dbReference>
<dbReference type="Gene3D" id="3.40.50.620">
    <property type="entry name" value="HUPs"/>
    <property type="match status" value="1"/>
</dbReference>
<dbReference type="Gene3D" id="3.10.400.10">
    <property type="entry name" value="Sulfate adenylyltransferase"/>
    <property type="match status" value="1"/>
</dbReference>
<dbReference type="HAMAP" id="MF_00066">
    <property type="entry name" value="Sulf_adenylyltr"/>
    <property type="match status" value="1"/>
</dbReference>
<dbReference type="InterPro" id="IPR025980">
    <property type="entry name" value="ATP-Sase_PUA-like_dom"/>
</dbReference>
<dbReference type="InterPro" id="IPR015947">
    <property type="entry name" value="PUA-like_sf"/>
</dbReference>
<dbReference type="InterPro" id="IPR014729">
    <property type="entry name" value="Rossmann-like_a/b/a_fold"/>
</dbReference>
<dbReference type="InterPro" id="IPR020792">
    <property type="entry name" value="SO4_adenylyltransferase_pro"/>
</dbReference>
<dbReference type="InterPro" id="IPR024951">
    <property type="entry name" value="Sulfurylase_cat_dom"/>
</dbReference>
<dbReference type="InterPro" id="IPR002650">
    <property type="entry name" value="Sulphate_adenylyltransferase"/>
</dbReference>
<dbReference type="NCBIfam" id="NF003166">
    <property type="entry name" value="PRK04149.1"/>
    <property type="match status" value="1"/>
</dbReference>
<dbReference type="NCBIfam" id="TIGR00339">
    <property type="entry name" value="sopT"/>
    <property type="match status" value="1"/>
</dbReference>
<dbReference type="PANTHER" id="PTHR43509">
    <property type="match status" value="1"/>
</dbReference>
<dbReference type="PANTHER" id="PTHR43509:SF1">
    <property type="entry name" value="SULFATE ADENYLYLTRANSFERASE"/>
    <property type="match status" value="1"/>
</dbReference>
<dbReference type="Pfam" id="PF01747">
    <property type="entry name" value="ATP-sulfurylase"/>
    <property type="match status" value="1"/>
</dbReference>
<dbReference type="Pfam" id="PF14306">
    <property type="entry name" value="PUA_2"/>
    <property type="match status" value="1"/>
</dbReference>
<dbReference type="SUPFAM" id="SSF52374">
    <property type="entry name" value="Nucleotidylyl transferase"/>
    <property type="match status" value="1"/>
</dbReference>
<dbReference type="SUPFAM" id="SSF88697">
    <property type="entry name" value="PUA domain-like"/>
    <property type="match status" value="1"/>
</dbReference>
<proteinExistence type="inferred from homology"/>
<comment type="catalytic activity">
    <reaction evidence="1">
        <text>sulfate + ATP + H(+) = adenosine 5'-phosphosulfate + diphosphate</text>
        <dbReference type="Rhea" id="RHEA:18133"/>
        <dbReference type="ChEBI" id="CHEBI:15378"/>
        <dbReference type="ChEBI" id="CHEBI:16189"/>
        <dbReference type="ChEBI" id="CHEBI:30616"/>
        <dbReference type="ChEBI" id="CHEBI:33019"/>
        <dbReference type="ChEBI" id="CHEBI:58243"/>
        <dbReference type="EC" id="2.7.7.4"/>
    </reaction>
</comment>
<comment type="pathway">
    <text evidence="1">Sulfur metabolism; hydrogen sulfide biosynthesis; sulfite from sulfate: step 1/3.</text>
</comment>
<comment type="similarity">
    <text evidence="1">Belongs to the sulfate adenylyltransferase family.</text>
</comment>
<name>SAT_STAHJ</name>
<reference key="1">
    <citation type="journal article" date="2005" name="J. Bacteriol.">
        <title>Whole-genome sequencing of Staphylococcus haemolyticus uncovers the extreme plasticity of its genome and the evolution of human-colonizing staphylococcal species.</title>
        <authorList>
            <person name="Takeuchi F."/>
            <person name="Watanabe S."/>
            <person name="Baba T."/>
            <person name="Yuzawa H."/>
            <person name="Ito T."/>
            <person name="Morimoto Y."/>
            <person name="Kuroda M."/>
            <person name="Cui L."/>
            <person name="Takahashi M."/>
            <person name="Ankai A."/>
            <person name="Baba S."/>
            <person name="Fukui S."/>
            <person name="Lee J.C."/>
            <person name="Hiramatsu K."/>
        </authorList>
    </citation>
    <scope>NUCLEOTIDE SEQUENCE [LARGE SCALE GENOMIC DNA]</scope>
    <source>
        <strain>JCSC1435</strain>
    </source>
</reference>
<gene>
    <name evidence="1" type="primary">sat</name>
    <name type="ordered locus">SH0419</name>
</gene>